<organism>
    <name type="scientific">Bos taurus</name>
    <name type="common">Bovine</name>
    <dbReference type="NCBI Taxonomy" id="9913"/>
    <lineage>
        <taxon>Eukaryota</taxon>
        <taxon>Metazoa</taxon>
        <taxon>Chordata</taxon>
        <taxon>Craniata</taxon>
        <taxon>Vertebrata</taxon>
        <taxon>Euteleostomi</taxon>
        <taxon>Mammalia</taxon>
        <taxon>Eutheria</taxon>
        <taxon>Laurasiatheria</taxon>
        <taxon>Artiodactyla</taxon>
        <taxon>Ruminantia</taxon>
        <taxon>Pecora</taxon>
        <taxon>Bovidae</taxon>
        <taxon>Bovinae</taxon>
        <taxon>Bos</taxon>
    </lineage>
</organism>
<evidence type="ECO:0000250" key="1"/>
<evidence type="ECO:0000250" key="2">
    <source>
        <dbReference type="UniProtKB" id="P09450"/>
    </source>
</evidence>
<evidence type="ECO:0000250" key="3">
    <source>
        <dbReference type="UniProtKB" id="P17275"/>
    </source>
</evidence>
<evidence type="ECO:0000255" key="4">
    <source>
        <dbReference type="PROSITE-ProRule" id="PRU00978"/>
    </source>
</evidence>
<evidence type="ECO:0000256" key="5">
    <source>
        <dbReference type="SAM" id="MobiDB-lite"/>
    </source>
</evidence>
<evidence type="ECO:0000305" key="6"/>
<accession>Q0VBZ5</accession>
<keyword id="KW-0007">Acetylation</keyword>
<keyword id="KW-0238">DNA-binding</keyword>
<keyword id="KW-1017">Isopeptide bond</keyword>
<keyword id="KW-0539">Nucleus</keyword>
<keyword id="KW-0597">Phosphoprotein</keyword>
<keyword id="KW-1185">Reference proteome</keyword>
<keyword id="KW-0804">Transcription</keyword>
<keyword id="KW-0805">Transcription regulation</keyword>
<keyword id="KW-0832">Ubl conjugation</keyword>
<gene>
    <name type="primary">JUNB</name>
</gene>
<feature type="chain" id="PRO_0000285212" description="Transcription factor JunB">
    <location>
        <begin position="1"/>
        <end position="347"/>
    </location>
</feature>
<feature type="domain" description="bZIP" evidence="4">
    <location>
        <begin position="268"/>
        <end position="331"/>
    </location>
</feature>
<feature type="region of interest" description="Disordered" evidence="5">
    <location>
        <begin position="50"/>
        <end position="77"/>
    </location>
</feature>
<feature type="region of interest" description="Disordered" evidence="5">
    <location>
        <begin position="241"/>
        <end position="260"/>
    </location>
</feature>
<feature type="region of interest" description="Basic motif" evidence="4">
    <location>
        <begin position="268"/>
        <end position="295"/>
    </location>
</feature>
<feature type="region of interest" description="Leucine-zipper" evidence="4">
    <location>
        <begin position="296"/>
        <end position="324"/>
    </location>
</feature>
<feature type="compositionally biased region" description="Gly residues" evidence="5">
    <location>
        <begin position="56"/>
        <end position="67"/>
    </location>
</feature>
<feature type="compositionally biased region" description="Polar residues" evidence="5">
    <location>
        <begin position="68"/>
        <end position="77"/>
    </location>
</feature>
<feature type="compositionally biased region" description="Basic and acidic residues" evidence="5">
    <location>
        <begin position="241"/>
        <end position="253"/>
    </location>
</feature>
<feature type="modified residue" description="Phosphothreonine" evidence="3">
    <location>
        <position position="102"/>
    </location>
</feature>
<feature type="modified residue" description="Phosphothreonine" evidence="3">
    <location>
        <position position="104"/>
    </location>
</feature>
<feature type="modified residue" description="Phosphoserine" evidence="3">
    <location>
        <position position="117"/>
    </location>
</feature>
<feature type="modified residue" description="N6-acetyllysine; alternate" evidence="2">
    <location>
        <position position="240"/>
    </location>
</feature>
<feature type="modified residue" description="Phosphoserine" evidence="3">
    <location>
        <position position="251"/>
    </location>
</feature>
<feature type="modified residue" description="Phosphothreonine" evidence="3">
    <location>
        <position position="255"/>
    </location>
</feature>
<feature type="modified residue" description="Phosphoserine" evidence="3">
    <location>
        <position position="259"/>
    </location>
</feature>
<feature type="cross-link" description="Glycyl lysine isopeptide (Lys-Gly) (interchain with G-Cter in SUMO2)" evidence="3">
    <location>
        <position position="4"/>
    </location>
</feature>
<feature type="cross-link" description="Glycyl lysine isopeptide (Lys-Gly) (interchain with G-Cter in SUMO2)" evidence="3">
    <location>
        <position position="33"/>
    </location>
</feature>
<feature type="cross-link" description="Glycyl lysine isopeptide (Lys-Gly) (interchain with G-Cter in SUMO2)" evidence="3">
    <location>
        <position position="36"/>
    </location>
</feature>
<feature type="cross-link" description="Glycyl lysine isopeptide (Lys-Gly) (interchain with G-Cter in SUMO2)" evidence="3">
    <location>
        <position position="81"/>
    </location>
</feature>
<feature type="cross-link" description="Glycyl lysine isopeptide (Lys-Gly) (interchain with G-Cter in SUMO2)" evidence="3">
    <location>
        <position position="141"/>
    </location>
</feature>
<feature type="cross-link" description="Glycyl lysine isopeptide (Lys-Gly) (interchain with G-Cter in SUMO1); alternate" evidence="3">
    <location>
        <position position="240"/>
    </location>
</feature>
<feature type="cross-link" description="Glycyl lysine isopeptide (Lys-Gly) (interchain with G-Cter in SUMO2); alternate" evidence="3">
    <location>
        <position position="240"/>
    </location>
</feature>
<feature type="cross-link" description="Glycyl lysine isopeptide (Lys-Gly) (interchain with G-Cter in SUMO2)" evidence="3">
    <location>
        <position position="343"/>
    </location>
</feature>
<comment type="function">
    <text evidence="1 2">Transcription factor involved in regulating gene activity following the primary growth factor response. Binds to the DNA sequence 5'-TGA[GC]TCA-3' (By similarity). Heterodimerizes with proteins of the FOS family to form an AP-1 transcription complex, thereby enhancing its DNA binding activity to an AP-1 consensus sequence and its transcriptional activity (By similarity).</text>
</comment>
<comment type="subunit">
    <text evidence="2 3">Binds DNA as a homodimer or as a heterodimer with another member of the Jun/Fos family (By similarity). Component of an AP-1 transcription factor complex composed of JUN-FOS heterodimers (By similarity). As part of the AP-1 transcription factor complex, forms heterodimers with FOSB, thereby binding to the AP-1 consensus sequence and stimulating transcription (By similarity). Interacts with ITCH (via its WW domains) (By similarity).</text>
</comment>
<comment type="subcellular location">
    <subcellularLocation>
        <location evidence="4">Nucleus</location>
    </subcellularLocation>
</comment>
<comment type="PTM">
    <text evidence="1">Ubiquitinated by ITCH, leading to its degradation.</text>
</comment>
<comment type="similarity">
    <text evidence="6">Belongs to the bZIP family. Jun subfamily.</text>
</comment>
<reference key="1">
    <citation type="submission" date="2006-08" db="EMBL/GenBank/DDBJ databases">
        <authorList>
            <consortium name="NIH - Mammalian Gene Collection (MGC) project"/>
        </authorList>
    </citation>
    <scope>NUCLEOTIDE SEQUENCE [LARGE SCALE MRNA]</scope>
    <source>
        <strain>Hereford</strain>
        <tissue>Basal ganglia</tissue>
    </source>
</reference>
<dbReference type="EMBL" id="BC120428">
    <property type="protein sequence ID" value="AAI20429.1"/>
    <property type="molecule type" value="mRNA"/>
</dbReference>
<dbReference type="RefSeq" id="NP_001069124.1">
    <property type="nucleotide sequence ID" value="NM_001075656.1"/>
</dbReference>
<dbReference type="SMR" id="Q0VBZ5"/>
<dbReference type="FunCoup" id="Q0VBZ5">
    <property type="interactions" value="256"/>
</dbReference>
<dbReference type="STRING" id="9913.ENSBTAP00000015987"/>
<dbReference type="PaxDb" id="9913-ENSBTAP00000015987"/>
<dbReference type="Ensembl" id="ENSBTAT00000015987.5">
    <property type="protein sequence ID" value="ENSBTAP00000015987.3"/>
    <property type="gene ID" value="ENSBTAG00000012046.5"/>
</dbReference>
<dbReference type="GeneID" id="514246"/>
<dbReference type="KEGG" id="bta:514246"/>
<dbReference type="CTD" id="3726"/>
<dbReference type="VEuPathDB" id="HostDB:ENSBTAG00000012046"/>
<dbReference type="VGNC" id="VGNC:30387">
    <property type="gene designation" value="JUNB"/>
</dbReference>
<dbReference type="eggNOG" id="KOG0837">
    <property type="taxonomic scope" value="Eukaryota"/>
</dbReference>
<dbReference type="GeneTree" id="ENSGT00940000161195"/>
<dbReference type="HOGENOM" id="CLU_057007_0_0_1"/>
<dbReference type="InParanoid" id="Q0VBZ5"/>
<dbReference type="OMA" id="YQGGQQD"/>
<dbReference type="OrthoDB" id="2187714at2759"/>
<dbReference type="Proteomes" id="UP000009136">
    <property type="component" value="Chromosome 7"/>
</dbReference>
<dbReference type="Bgee" id="ENSBTAG00000012046">
    <property type="expression patterns" value="Expressed in ureter and 104 other cell types or tissues"/>
</dbReference>
<dbReference type="GO" id="GO:0005654">
    <property type="term" value="C:nucleoplasm"/>
    <property type="evidence" value="ECO:0007669"/>
    <property type="project" value="Ensembl"/>
</dbReference>
<dbReference type="GO" id="GO:0035976">
    <property type="term" value="C:transcription factor AP-1 complex"/>
    <property type="evidence" value="ECO:0007669"/>
    <property type="project" value="Ensembl"/>
</dbReference>
<dbReference type="GO" id="GO:0005667">
    <property type="term" value="C:transcription regulator complex"/>
    <property type="evidence" value="ECO:0000318"/>
    <property type="project" value="GO_Central"/>
</dbReference>
<dbReference type="GO" id="GO:0001228">
    <property type="term" value="F:DNA-binding transcription activator activity, RNA polymerase II-specific"/>
    <property type="evidence" value="ECO:0007669"/>
    <property type="project" value="Ensembl"/>
</dbReference>
<dbReference type="GO" id="GO:0000981">
    <property type="term" value="F:DNA-binding transcription factor activity, RNA polymerase II-specific"/>
    <property type="evidence" value="ECO:0000318"/>
    <property type="project" value="GO_Central"/>
</dbReference>
<dbReference type="GO" id="GO:0000978">
    <property type="term" value="F:RNA polymerase II cis-regulatory region sequence-specific DNA binding"/>
    <property type="evidence" value="ECO:0000318"/>
    <property type="project" value="GO_Central"/>
</dbReference>
<dbReference type="GO" id="GO:0071277">
    <property type="term" value="P:cellular response to calcium ion"/>
    <property type="evidence" value="ECO:0007669"/>
    <property type="project" value="Ensembl"/>
</dbReference>
<dbReference type="GO" id="GO:0046697">
    <property type="term" value="P:decidualization"/>
    <property type="evidence" value="ECO:0007669"/>
    <property type="project" value="Ensembl"/>
</dbReference>
<dbReference type="GO" id="GO:0060136">
    <property type="term" value="P:embryonic process involved in female pregnancy"/>
    <property type="evidence" value="ECO:0007669"/>
    <property type="project" value="Ensembl"/>
</dbReference>
<dbReference type="GO" id="GO:0060716">
    <property type="term" value="P:labyrinthine layer blood vessel development"/>
    <property type="evidence" value="ECO:0007669"/>
    <property type="project" value="Ensembl"/>
</dbReference>
<dbReference type="GO" id="GO:0001649">
    <property type="term" value="P:osteoblast differentiation"/>
    <property type="evidence" value="ECO:0007669"/>
    <property type="project" value="Ensembl"/>
</dbReference>
<dbReference type="GO" id="GO:0033687">
    <property type="term" value="P:osteoblast proliferation"/>
    <property type="evidence" value="ECO:0007669"/>
    <property type="project" value="Ensembl"/>
</dbReference>
<dbReference type="GO" id="GO:0030316">
    <property type="term" value="P:osteoclast differentiation"/>
    <property type="evidence" value="ECO:0007669"/>
    <property type="project" value="Ensembl"/>
</dbReference>
<dbReference type="GO" id="GO:0002158">
    <property type="term" value="P:osteoclast proliferation"/>
    <property type="evidence" value="ECO:0007669"/>
    <property type="project" value="Ensembl"/>
</dbReference>
<dbReference type="GO" id="GO:0045597">
    <property type="term" value="P:positive regulation of cell differentiation"/>
    <property type="evidence" value="ECO:0007669"/>
    <property type="project" value="Ensembl"/>
</dbReference>
<dbReference type="GO" id="GO:0045944">
    <property type="term" value="P:positive regulation of transcription by RNA polymerase II"/>
    <property type="evidence" value="ECO:0000318"/>
    <property type="project" value="GO_Central"/>
</dbReference>
<dbReference type="GO" id="GO:0051726">
    <property type="term" value="P:regulation of cell cycle"/>
    <property type="evidence" value="ECO:0000318"/>
    <property type="project" value="GO_Central"/>
</dbReference>
<dbReference type="GO" id="GO:0042127">
    <property type="term" value="P:regulation of cell population proliferation"/>
    <property type="evidence" value="ECO:0000318"/>
    <property type="project" value="GO_Central"/>
</dbReference>
<dbReference type="GO" id="GO:0048545">
    <property type="term" value="P:response to steroid hormone"/>
    <property type="evidence" value="ECO:0000318"/>
    <property type="project" value="GO_Central"/>
</dbReference>
<dbReference type="GO" id="GO:0001829">
    <property type="term" value="P:trophectodermal cell differentiation"/>
    <property type="evidence" value="ECO:0007669"/>
    <property type="project" value="Ensembl"/>
</dbReference>
<dbReference type="GO" id="GO:0001570">
    <property type="term" value="P:vasculogenesis"/>
    <property type="evidence" value="ECO:0007669"/>
    <property type="project" value="Ensembl"/>
</dbReference>
<dbReference type="CDD" id="cd14696">
    <property type="entry name" value="bZIP_Jun"/>
    <property type="match status" value="1"/>
</dbReference>
<dbReference type="FunFam" id="1.20.5.170:FF:000012">
    <property type="entry name" value="Putative transcription factor AP-1"/>
    <property type="match status" value="1"/>
</dbReference>
<dbReference type="Gene3D" id="1.20.5.170">
    <property type="match status" value="1"/>
</dbReference>
<dbReference type="InterPro" id="IPR050946">
    <property type="entry name" value="AP-1_TF_bZIP"/>
</dbReference>
<dbReference type="InterPro" id="IPR004827">
    <property type="entry name" value="bZIP"/>
</dbReference>
<dbReference type="InterPro" id="IPR046347">
    <property type="entry name" value="bZIP_sf"/>
</dbReference>
<dbReference type="InterPro" id="IPR005643">
    <property type="entry name" value="JNK"/>
</dbReference>
<dbReference type="InterPro" id="IPR002112">
    <property type="entry name" value="Leuzip_Jun"/>
</dbReference>
<dbReference type="InterPro" id="IPR008917">
    <property type="entry name" value="TF_DNA-bd_sf"/>
</dbReference>
<dbReference type="PANTHER" id="PTHR11462">
    <property type="entry name" value="JUN TRANSCRIPTION FACTOR-RELATED"/>
    <property type="match status" value="1"/>
</dbReference>
<dbReference type="PANTHER" id="PTHR11462:SF37">
    <property type="entry name" value="TRANSCRIPTION FACTOR JUNB"/>
    <property type="match status" value="1"/>
</dbReference>
<dbReference type="Pfam" id="PF00170">
    <property type="entry name" value="bZIP_1"/>
    <property type="match status" value="1"/>
</dbReference>
<dbReference type="Pfam" id="PF03957">
    <property type="entry name" value="Jun"/>
    <property type="match status" value="1"/>
</dbReference>
<dbReference type="PRINTS" id="PR00043">
    <property type="entry name" value="LEUZIPPRJUN"/>
</dbReference>
<dbReference type="SMART" id="SM00338">
    <property type="entry name" value="BRLZ"/>
    <property type="match status" value="1"/>
</dbReference>
<dbReference type="SUPFAM" id="SSF47454">
    <property type="entry name" value="A DNA-binding domain in eukaryotic transcription factors"/>
    <property type="match status" value="1"/>
</dbReference>
<dbReference type="SUPFAM" id="SSF57959">
    <property type="entry name" value="Leucine zipper domain"/>
    <property type="match status" value="1"/>
</dbReference>
<dbReference type="PROSITE" id="PS50217">
    <property type="entry name" value="BZIP"/>
    <property type="match status" value="1"/>
</dbReference>
<dbReference type="PROSITE" id="PS00036">
    <property type="entry name" value="BZIP_BASIC"/>
    <property type="match status" value="1"/>
</dbReference>
<proteinExistence type="evidence at transcript level"/>
<sequence length="347" mass="35929">MCTKMEQPFYHDDSYAAAGYGRTPGGLSLHDYKLLKPSLALNLSDPYRNLKAPGARGPGPEGNGGGSYFSSQGSDTGASLKLASSELERLIVPNSNGVITTTPTPPGQYFYPRGGGSGGGAGGAGGGVTEEQEGFADGFVKALDDLHKMNHVTPPNVSLGASGGPPAGPGGVYAGPEPPPVYTNLSSYSPASAPSGGAGAAVGTGSSYPTATISYLPHAPPFAGGHPAQLGLGRGASAFKEEPQTVPEARSRDATPPVSPINMEDQERIKVERKRLRNRLAATKCRKRKLERIARLEDKVKTLKAENAGLSSTAGLLREQVAQLKQKVMTHVSNGCQLLLGVKGHAF</sequence>
<name>JUNB_BOVIN</name>
<protein>
    <recommendedName>
        <fullName evidence="6">Transcription factor JunB</fullName>
    </recommendedName>
    <alternativeName>
        <fullName evidence="6">Transcription factor AP-1 subunit JunB</fullName>
    </alternativeName>
</protein>